<feature type="chain" id="PRO_1000099388" description="DNA repair protein RecO">
    <location>
        <begin position="1"/>
        <end position="264"/>
    </location>
</feature>
<gene>
    <name evidence="1" type="primary">recO</name>
    <name type="ordered locus">LCK_00714</name>
</gene>
<comment type="function">
    <text evidence="1">Involved in DNA repair and RecF pathway recombination.</text>
</comment>
<comment type="similarity">
    <text evidence="1">Belongs to the RecO family.</text>
</comment>
<reference key="1">
    <citation type="journal article" date="2008" name="J. Bacteriol.">
        <title>Complete genome sequence of Leuconostoc citreum KM20.</title>
        <authorList>
            <person name="Kim J.F."/>
            <person name="Jeong H."/>
            <person name="Lee J.-S."/>
            <person name="Choi S.-H."/>
            <person name="Ha M."/>
            <person name="Hur C.-G."/>
            <person name="Kim J.-S."/>
            <person name="Lee S."/>
            <person name="Park H.-S."/>
            <person name="Park Y.-H."/>
            <person name="Oh T.K."/>
        </authorList>
    </citation>
    <scope>NUCLEOTIDE SEQUENCE [LARGE SCALE GENOMIC DNA]</scope>
    <source>
        <strain>KM20</strain>
    </source>
</reference>
<evidence type="ECO:0000255" key="1">
    <source>
        <dbReference type="HAMAP-Rule" id="MF_00201"/>
    </source>
</evidence>
<sequence length="264" mass="30152">MTVINGIILSTRQYKDNDLLVRILTETGGLRTFLARGAKKPKSALGSALQPHAVLSFEGAFPKNNQGLGYINDIQTIKIYQRLIDDIEVNAYAALIASLIDQTFEEGEQLTRWYNQFVLGLQKLDEGLDPQIIANIFEIQLLVPLGVAPNWRQDPISGQSVGQFDYSEKYNGIISDKHYDLDDHRLMLDQKTVFYLRQFSIIDLRQINQINISETTKRGLQRVIDHIYDNQIGLKPKAKTFIEQMHAWQNTLINFRQNGEGKSE</sequence>
<proteinExistence type="inferred from homology"/>
<protein>
    <recommendedName>
        <fullName evidence="1">DNA repair protein RecO</fullName>
    </recommendedName>
    <alternativeName>
        <fullName evidence="1">Recombination protein O</fullName>
    </alternativeName>
</protein>
<keyword id="KW-0227">DNA damage</keyword>
<keyword id="KW-0233">DNA recombination</keyword>
<keyword id="KW-0234">DNA repair</keyword>
<keyword id="KW-1185">Reference proteome</keyword>
<organism>
    <name type="scientific">Leuconostoc citreum (strain KM20)</name>
    <dbReference type="NCBI Taxonomy" id="349519"/>
    <lineage>
        <taxon>Bacteria</taxon>
        <taxon>Bacillati</taxon>
        <taxon>Bacillota</taxon>
        <taxon>Bacilli</taxon>
        <taxon>Lactobacillales</taxon>
        <taxon>Lactobacillaceae</taxon>
        <taxon>Leuconostoc</taxon>
    </lineage>
</organism>
<accession>B1MYE4</accession>
<dbReference type="EMBL" id="DQ489736">
    <property type="protein sequence ID" value="ACA82546.1"/>
    <property type="molecule type" value="Genomic_DNA"/>
</dbReference>
<dbReference type="RefSeq" id="WP_004907009.1">
    <property type="nucleotide sequence ID" value="NC_010471.1"/>
</dbReference>
<dbReference type="SMR" id="B1MYE4"/>
<dbReference type="STRING" id="349519.LCK_00714"/>
<dbReference type="KEGG" id="lci:LCK_00714"/>
<dbReference type="eggNOG" id="COG1381">
    <property type="taxonomic scope" value="Bacteria"/>
</dbReference>
<dbReference type="HOGENOM" id="CLU_066632_4_0_9"/>
<dbReference type="OrthoDB" id="9797083at2"/>
<dbReference type="Proteomes" id="UP000002166">
    <property type="component" value="Chromosome"/>
</dbReference>
<dbReference type="GO" id="GO:0043590">
    <property type="term" value="C:bacterial nucleoid"/>
    <property type="evidence" value="ECO:0007669"/>
    <property type="project" value="TreeGrafter"/>
</dbReference>
<dbReference type="GO" id="GO:0006310">
    <property type="term" value="P:DNA recombination"/>
    <property type="evidence" value="ECO:0007669"/>
    <property type="project" value="UniProtKB-UniRule"/>
</dbReference>
<dbReference type="GO" id="GO:0006302">
    <property type="term" value="P:double-strand break repair"/>
    <property type="evidence" value="ECO:0007669"/>
    <property type="project" value="TreeGrafter"/>
</dbReference>
<dbReference type="Gene3D" id="2.40.50.140">
    <property type="entry name" value="Nucleic acid-binding proteins"/>
    <property type="match status" value="1"/>
</dbReference>
<dbReference type="Gene3D" id="1.20.1440.120">
    <property type="entry name" value="Recombination protein O, C-terminal domain"/>
    <property type="match status" value="1"/>
</dbReference>
<dbReference type="HAMAP" id="MF_00201">
    <property type="entry name" value="RecO"/>
    <property type="match status" value="1"/>
</dbReference>
<dbReference type="InterPro" id="IPR037278">
    <property type="entry name" value="ARFGAP/RecO"/>
</dbReference>
<dbReference type="InterPro" id="IPR022572">
    <property type="entry name" value="DNA_rep/recomb_RecO_N"/>
</dbReference>
<dbReference type="InterPro" id="IPR012340">
    <property type="entry name" value="NA-bd_OB-fold"/>
</dbReference>
<dbReference type="InterPro" id="IPR003717">
    <property type="entry name" value="RecO"/>
</dbReference>
<dbReference type="InterPro" id="IPR042242">
    <property type="entry name" value="RecO_C"/>
</dbReference>
<dbReference type="NCBIfam" id="TIGR00613">
    <property type="entry name" value="reco"/>
    <property type="match status" value="1"/>
</dbReference>
<dbReference type="PANTHER" id="PTHR33991">
    <property type="entry name" value="DNA REPAIR PROTEIN RECO"/>
    <property type="match status" value="1"/>
</dbReference>
<dbReference type="PANTHER" id="PTHR33991:SF1">
    <property type="entry name" value="DNA REPAIR PROTEIN RECO"/>
    <property type="match status" value="1"/>
</dbReference>
<dbReference type="Pfam" id="PF02565">
    <property type="entry name" value="RecO_C"/>
    <property type="match status" value="1"/>
</dbReference>
<dbReference type="Pfam" id="PF11967">
    <property type="entry name" value="RecO_N"/>
    <property type="match status" value="1"/>
</dbReference>
<dbReference type="SUPFAM" id="SSF57863">
    <property type="entry name" value="ArfGap/RecO-like zinc finger"/>
    <property type="match status" value="1"/>
</dbReference>
<dbReference type="SUPFAM" id="SSF50249">
    <property type="entry name" value="Nucleic acid-binding proteins"/>
    <property type="match status" value="1"/>
</dbReference>
<name>RECO_LEUCK</name>